<geneLocation type="chloroplast"/>
<proteinExistence type="inferred from homology"/>
<sequence>MGKVYDWFEERLEVQAIADDISSKYVPPHVNIFYCFGGIVFTCFLVQVATGFAMTFYYRPSVVDAFASVEYIMTSVNFGWLIRSIHRWSASMMVMMLVLHVFRVYLTGGFKKPRELTWVTGVILAVVTVSFGVTGYSLPWDQVGFWACKIVTGVPAAVPIVGPPLVLVLRGGESVGQSTLTRFYSAHTFVLPLAAAVLMLTHFLMIRKQGISGPL</sequence>
<reference key="1">
    <citation type="journal article" date="1999" name="DNA Seq.">
        <title>Comparison of gene arrangements of chloroplasts between two centric diatoms, Skeletonema costatum and Odontella sinensis.</title>
        <authorList>
            <person name="Tada N."/>
            <person name="Shibata S."/>
            <person name="Otsuka S."/>
            <person name="Namba K."/>
            <person name="Oyaizu H."/>
        </authorList>
    </citation>
    <scope>NUCLEOTIDE SEQUENCE [GENOMIC DNA]</scope>
    <source>
        <strain>NIES-323 / Sk-85w</strain>
    </source>
</reference>
<accession>O96801</accession>
<comment type="function">
    <text evidence="1">Component of the cytochrome b6-f complex, which mediates electron transfer between photosystem II (PSII) and photosystem I (PSI), cyclic electron flow around PSI, and state transitions.</text>
</comment>
<comment type="cofactor">
    <cofactor evidence="1">
        <name>heme b</name>
        <dbReference type="ChEBI" id="CHEBI:60344"/>
    </cofactor>
    <text evidence="1">Binds 2 heme b groups non-covalently with two histidine residues as axial ligands.</text>
</comment>
<comment type="cofactor">
    <cofactor evidence="1">
        <name>heme c</name>
        <dbReference type="ChEBI" id="CHEBI:61717"/>
    </cofactor>
    <text evidence="1">Binds one heme group covalently by a single cysteine link with no axial amino acid ligand. This heme was named heme ci.</text>
</comment>
<comment type="subunit">
    <text evidence="1">The 4 large subunits of the cytochrome b6-f complex are cytochrome b6, subunit IV (17 kDa polypeptide, PetD), cytochrome f and the Rieske protein, while the 4 small subunits are PetG, PetL, PetM and PetN. The complex functions as a dimer.</text>
</comment>
<comment type="subcellular location">
    <subcellularLocation>
        <location evidence="1">Plastid</location>
        <location evidence="1">Chloroplast thylakoid membrane</location>
        <topology evidence="1">Multi-pass membrane protein</topology>
    </subcellularLocation>
</comment>
<comment type="miscellaneous">
    <text evidence="1">Heme 1 (or BH or b566) is high-potential and absorbs at about 566 nm, and heme 2 (or BL or b562) is low-potential and absorbs at about 562 nm.</text>
</comment>
<comment type="similarity">
    <text evidence="1">Belongs to the cytochrome b family. PetB subfamily.</text>
</comment>
<dbReference type="EMBL" id="AJ132263">
    <property type="protein sequence ID" value="CAA10622.1"/>
    <property type="molecule type" value="Genomic_DNA"/>
</dbReference>
<dbReference type="SMR" id="O96801"/>
<dbReference type="GO" id="GO:0009535">
    <property type="term" value="C:chloroplast thylakoid membrane"/>
    <property type="evidence" value="ECO:0007669"/>
    <property type="project" value="UniProtKB-SubCell"/>
</dbReference>
<dbReference type="GO" id="GO:0045158">
    <property type="term" value="F:electron transporter, transferring electrons within cytochrome b6/f complex of photosystem II activity"/>
    <property type="evidence" value="ECO:0007669"/>
    <property type="project" value="UniProtKB-UniRule"/>
</dbReference>
<dbReference type="GO" id="GO:0046872">
    <property type="term" value="F:metal ion binding"/>
    <property type="evidence" value="ECO:0007669"/>
    <property type="project" value="UniProtKB-KW"/>
</dbReference>
<dbReference type="GO" id="GO:0016491">
    <property type="term" value="F:oxidoreductase activity"/>
    <property type="evidence" value="ECO:0007669"/>
    <property type="project" value="InterPro"/>
</dbReference>
<dbReference type="GO" id="GO:0015979">
    <property type="term" value="P:photosynthesis"/>
    <property type="evidence" value="ECO:0007669"/>
    <property type="project" value="UniProtKB-UniRule"/>
</dbReference>
<dbReference type="GO" id="GO:0022904">
    <property type="term" value="P:respiratory electron transport chain"/>
    <property type="evidence" value="ECO:0007669"/>
    <property type="project" value="InterPro"/>
</dbReference>
<dbReference type="CDD" id="cd00284">
    <property type="entry name" value="Cytochrome_b_N"/>
    <property type="match status" value="1"/>
</dbReference>
<dbReference type="FunFam" id="1.20.810.10:FF:000001">
    <property type="entry name" value="Cytochrome b6"/>
    <property type="match status" value="1"/>
</dbReference>
<dbReference type="Gene3D" id="1.20.810.10">
    <property type="entry name" value="Cytochrome Bc1 Complex, Chain C"/>
    <property type="match status" value="1"/>
</dbReference>
<dbReference type="HAMAP" id="MF_00633">
    <property type="entry name" value="Cytb6_f_cytb6"/>
    <property type="match status" value="1"/>
</dbReference>
<dbReference type="InterPro" id="IPR005797">
    <property type="entry name" value="Cyt_b/b6_N"/>
</dbReference>
<dbReference type="InterPro" id="IPR023530">
    <property type="entry name" value="Cyt_B6_PetB"/>
</dbReference>
<dbReference type="InterPro" id="IPR027387">
    <property type="entry name" value="Cytb/b6-like_sf"/>
</dbReference>
<dbReference type="InterPro" id="IPR048259">
    <property type="entry name" value="Cytochrome_b_N_euk/bac"/>
</dbReference>
<dbReference type="InterPro" id="IPR016174">
    <property type="entry name" value="Di-haem_cyt_TM"/>
</dbReference>
<dbReference type="NCBIfam" id="NF002990">
    <property type="entry name" value="PRK03735.1"/>
    <property type="match status" value="1"/>
</dbReference>
<dbReference type="PANTHER" id="PTHR19271">
    <property type="entry name" value="CYTOCHROME B"/>
    <property type="match status" value="1"/>
</dbReference>
<dbReference type="PANTHER" id="PTHR19271:SF16">
    <property type="entry name" value="CYTOCHROME B"/>
    <property type="match status" value="1"/>
</dbReference>
<dbReference type="Pfam" id="PF00033">
    <property type="entry name" value="Cytochrome_B"/>
    <property type="match status" value="1"/>
</dbReference>
<dbReference type="PIRSF" id="PIRSF000032">
    <property type="entry name" value="Cytochrome_b6"/>
    <property type="match status" value="1"/>
</dbReference>
<dbReference type="SUPFAM" id="SSF81342">
    <property type="entry name" value="Transmembrane di-heme cytochromes"/>
    <property type="match status" value="1"/>
</dbReference>
<dbReference type="PROSITE" id="PS51002">
    <property type="entry name" value="CYTB_NTER"/>
    <property type="match status" value="1"/>
</dbReference>
<keyword id="KW-0150">Chloroplast</keyword>
<keyword id="KW-0249">Electron transport</keyword>
<keyword id="KW-0349">Heme</keyword>
<keyword id="KW-0408">Iron</keyword>
<keyword id="KW-0472">Membrane</keyword>
<keyword id="KW-0479">Metal-binding</keyword>
<keyword id="KW-0602">Photosynthesis</keyword>
<keyword id="KW-0934">Plastid</keyword>
<keyword id="KW-0793">Thylakoid</keyword>
<keyword id="KW-0812">Transmembrane</keyword>
<keyword id="KW-1133">Transmembrane helix</keyword>
<keyword id="KW-0813">Transport</keyword>
<organism>
    <name type="scientific">Skeletonema costatum</name>
    <name type="common">Marine centric diatom</name>
    <name type="synonym">Melosira costata</name>
    <dbReference type="NCBI Taxonomy" id="2843"/>
    <lineage>
        <taxon>Eukaryota</taxon>
        <taxon>Sar</taxon>
        <taxon>Stramenopiles</taxon>
        <taxon>Ochrophyta</taxon>
        <taxon>Bacillariophyta</taxon>
        <taxon>Coscinodiscophyceae</taxon>
        <taxon>Thalassiosirophycidae</taxon>
        <taxon>Thalassiosirales</taxon>
        <taxon>Skeletonemataceae</taxon>
        <taxon>Skeletonema</taxon>
    </lineage>
</organism>
<evidence type="ECO:0000255" key="1">
    <source>
        <dbReference type="HAMAP-Rule" id="MF_00633"/>
    </source>
</evidence>
<feature type="chain" id="PRO_0000061819" description="Cytochrome b6">
    <location>
        <begin position="1"/>
        <end position="215"/>
    </location>
</feature>
<feature type="transmembrane region" description="Helical" evidence="1">
    <location>
        <begin position="32"/>
        <end position="52"/>
    </location>
</feature>
<feature type="transmembrane region" description="Helical" evidence="1">
    <location>
        <begin position="90"/>
        <end position="110"/>
    </location>
</feature>
<feature type="transmembrane region" description="Helical" evidence="1">
    <location>
        <begin position="116"/>
        <end position="136"/>
    </location>
</feature>
<feature type="transmembrane region" description="Helical" evidence="1">
    <location>
        <begin position="186"/>
        <end position="206"/>
    </location>
</feature>
<feature type="binding site" description="covalent" evidence="1">
    <location>
        <position position="35"/>
    </location>
    <ligand>
        <name>heme c</name>
        <dbReference type="ChEBI" id="CHEBI:61717"/>
    </ligand>
</feature>
<feature type="binding site" description="axial binding residue" evidence="1">
    <location>
        <position position="86"/>
    </location>
    <ligand>
        <name>heme b</name>
        <dbReference type="ChEBI" id="CHEBI:60344"/>
        <label>2</label>
    </ligand>
    <ligandPart>
        <name>Fe</name>
        <dbReference type="ChEBI" id="CHEBI:18248"/>
    </ligandPart>
</feature>
<feature type="binding site" description="axial binding residue" evidence="1">
    <location>
        <position position="100"/>
    </location>
    <ligand>
        <name>heme b</name>
        <dbReference type="ChEBI" id="CHEBI:60344"/>
        <label>1</label>
    </ligand>
    <ligandPart>
        <name>Fe</name>
        <dbReference type="ChEBI" id="CHEBI:18248"/>
    </ligandPart>
</feature>
<feature type="binding site" description="axial binding residue" evidence="1">
    <location>
        <position position="187"/>
    </location>
    <ligand>
        <name>heme b</name>
        <dbReference type="ChEBI" id="CHEBI:60344"/>
        <label>2</label>
    </ligand>
    <ligandPart>
        <name>Fe</name>
        <dbReference type="ChEBI" id="CHEBI:18248"/>
    </ligandPart>
</feature>
<feature type="binding site" description="axial binding residue" evidence="1">
    <location>
        <position position="202"/>
    </location>
    <ligand>
        <name>heme b</name>
        <dbReference type="ChEBI" id="CHEBI:60344"/>
        <label>1</label>
    </ligand>
    <ligandPart>
        <name>Fe</name>
        <dbReference type="ChEBI" id="CHEBI:18248"/>
    </ligandPart>
</feature>
<name>CYB6_SKECO</name>
<protein>
    <recommendedName>
        <fullName evidence="1">Cytochrome b6</fullName>
    </recommendedName>
</protein>
<gene>
    <name evidence="1" type="primary">petB</name>
</gene>